<reference key="1">
    <citation type="journal article" date="1993" name="Gene">
        <title>Cloning and organization of the abc and mdl genes of Escherichia coli: relationship to eukaryotic multidrug resistance.</title>
        <authorList>
            <person name="Allikmets R."/>
            <person name="Gerrard B.C."/>
            <person name="Court D."/>
            <person name="Dean M.C."/>
        </authorList>
    </citation>
    <scope>NUCLEOTIDE SEQUENCE [GENOMIC DNA]</scope>
    <source>
        <strain>TAP90 / ATCC 47037</strain>
    </source>
</reference>
<reference key="2">
    <citation type="submission" date="1997-01" db="EMBL/GenBank/DDBJ databases">
        <title>Sequence of minutes 4-25 of Escherichia coli.</title>
        <authorList>
            <person name="Chung E."/>
            <person name="Allen E."/>
            <person name="Araujo R."/>
            <person name="Aparicio A.M."/>
            <person name="Davis K."/>
            <person name="Duncan M."/>
            <person name="Federspiel N."/>
            <person name="Hyman R."/>
            <person name="Kalman S."/>
            <person name="Komp C."/>
            <person name="Kurdi O."/>
            <person name="Lew H."/>
            <person name="Lin D."/>
            <person name="Namath A."/>
            <person name="Oefner P."/>
            <person name="Roberts D."/>
            <person name="Schramm S."/>
            <person name="Davis R.W."/>
        </authorList>
    </citation>
    <scope>NUCLEOTIDE SEQUENCE [LARGE SCALE GENOMIC DNA]</scope>
    <source>
        <strain>K12 / MG1655 / ATCC 47076</strain>
    </source>
</reference>
<reference key="3">
    <citation type="journal article" date="1997" name="Science">
        <title>The complete genome sequence of Escherichia coli K-12.</title>
        <authorList>
            <person name="Blattner F.R."/>
            <person name="Plunkett G. III"/>
            <person name="Bloch C.A."/>
            <person name="Perna N.T."/>
            <person name="Burland V."/>
            <person name="Riley M."/>
            <person name="Collado-Vides J."/>
            <person name="Glasner J.D."/>
            <person name="Rode C.K."/>
            <person name="Mayhew G.F."/>
            <person name="Gregor J."/>
            <person name="Davis N.W."/>
            <person name="Kirkpatrick H.A."/>
            <person name="Goeden M.A."/>
            <person name="Rose D.J."/>
            <person name="Mau B."/>
            <person name="Shao Y."/>
        </authorList>
    </citation>
    <scope>NUCLEOTIDE SEQUENCE [LARGE SCALE GENOMIC DNA]</scope>
    <source>
        <strain>K12 / MG1655 / ATCC 47076</strain>
    </source>
</reference>
<reference key="4">
    <citation type="journal article" date="2006" name="Mol. Syst. Biol.">
        <title>Highly accurate genome sequences of Escherichia coli K-12 strains MG1655 and W3110.</title>
        <authorList>
            <person name="Hayashi K."/>
            <person name="Morooka N."/>
            <person name="Yamamoto Y."/>
            <person name="Fujita K."/>
            <person name="Isono K."/>
            <person name="Choi S."/>
            <person name="Ohtsubo E."/>
            <person name="Baba T."/>
            <person name="Wanner B.L."/>
            <person name="Mori H."/>
            <person name="Horiuchi T."/>
        </authorList>
    </citation>
    <scope>NUCLEOTIDE SEQUENCE [LARGE SCALE GENOMIC DNA]</scope>
    <source>
        <strain>K12 / W3110 / ATCC 27325 / DSM 5911</strain>
    </source>
</reference>
<reference key="5">
    <citation type="journal article" date="2005" name="Science">
        <title>Global topology analysis of the Escherichia coli inner membrane proteome.</title>
        <authorList>
            <person name="Daley D.O."/>
            <person name="Rapp M."/>
            <person name="Granseth E."/>
            <person name="Melen K."/>
            <person name="Drew D."/>
            <person name="von Heijne G."/>
        </authorList>
    </citation>
    <scope>SUBCELLULAR LOCATION</scope>
    <source>
        <strain>K12 / MG1655 / ATCC 47076</strain>
    </source>
</reference>
<accession>P77265</accession>
<accession>P30751</accession>
<accession>Q2MBX8</accession>
<evidence type="ECO:0000255" key="1">
    <source>
        <dbReference type="PROSITE-ProRule" id="PRU00434"/>
    </source>
</evidence>
<evidence type="ECO:0000255" key="2">
    <source>
        <dbReference type="PROSITE-ProRule" id="PRU00441"/>
    </source>
</evidence>
<evidence type="ECO:0000269" key="3">
    <source>
    </source>
</evidence>
<evidence type="ECO:0000305" key="4"/>
<feature type="chain" id="PRO_0000092492" description="Multidrug resistance-like ATP-binding protein MdlA">
    <location>
        <begin position="1"/>
        <end position="590"/>
    </location>
</feature>
<feature type="transmembrane region" description="Helical" evidence="2">
    <location>
        <begin position="23"/>
        <end position="43"/>
    </location>
</feature>
<feature type="transmembrane region" description="Helical" evidence="2">
    <location>
        <begin position="53"/>
        <end position="73"/>
    </location>
</feature>
<feature type="transmembrane region" description="Helical" evidence="2">
    <location>
        <begin position="134"/>
        <end position="154"/>
    </location>
</feature>
<feature type="transmembrane region" description="Helical" evidence="2">
    <location>
        <begin position="155"/>
        <end position="175"/>
    </location>
</feature>
<feature type="transmembrane region" description="Helical" evidence="2">
    <location>
        <begin position="248"/>
        <end position="268"/>
    </location>
</feature>
<feature type="transmembrane region" description="Helical" evidence="2">
    <location>
        <begin position="280"/>
        <end position="300"/>
    </location>
</feature>
<feature type="domain" description="ABC transmembrane type-1" evidence="2">
    <location>
        <begin position="18"/>
        <end position="303"/>
    </location>
</feature>
<feature type="domain" description="ABC transporter" evidence="1">
    <location>
        <begin position="337"/>
        <end position="570"/>
    </location>
</feature>
<feature type="binding site" evidence="1">
    <location>
        <begin position="369"/>
        <end position="376"/>
    </location>
    <ligand>
        <name>ATP</name>
        <dbReference type="ChEBI" id="CHEBI:30616"/>
    </ligand>
</feature>
<feature type="sequence conflict" description="In Ref. 1; AAC36870." evidence="4" ref="1">
    <original>G</original>
    <variation>A</variation>
    <location>
        <position position="145"/>
    </location>
</feature>
<feature type="sequence conflict" description="In Ref. 1; AAC36870." evidence="4" ref="1">
    <original>NM</original>
    <variation>KL</variation>
    <location>
        <begin position="234"/>
        <end position="235"/>
    </location>
</feature>
<feature type="sequence conflict" description="In Ref. 1; AAC36870." evidence="4" ref="1">
    <original>A</original>
    <variation>R</variation>
    <location>
        <position position="318"/>
    </location>
</feature>
<feature type="sequence conflict" description="In Ref. 1; AAC36870." evidence="4" ref="1">
    <original>T</original>
    <variation>N</variation>
    <location>
        <position position="371"/>
    </location>
</feature>
<feature type="sequence conflict" description="In Ref. 1; AAC36870." evidence="4" ref="1">
    <original>E</original>
    <variation>P</variation>
    <location>
        <position position="390"/>
    </location>
</feature>
<feature type="sequence conflict" description="In Ref. 1; AAC36870." evidence="4" ref="1">
    <original>SR</original>
    <variation>TG</variation>
    <location>
        <begin position="410"/>
        <end position="411"/>
    </location>
</feature>
<organism>
    <name type="scientific">Escherichia coli (strain K12)</name>
    <dbReference type="NCBI Taxonomy" id="83333"/>
    <lineage>
        <taxon>Bacteria</taxon>
        <taxon>Pseudomonadati</taxon>
        <taxon>Pseudomonadota</taxon>
        <taxon>Gammaproteobacteria</taxon>
        <taxon>Enterobacterales</taxon>
        <taxon>Enterobacteriaceae</taxon>
        <taxon>Escherichia</taxon>
    </lineage>
</organism>
<keyword id="KW-0067">ATP-binding</keyword>
<keyword id="KW-0997">Cell inner membrane</keyword>
<keyword id="KW-1003">Cell membrane</keyword>
<keyword id="KW-0472">Membrane</keyword>
<keyword id="KW-0547">Nucleotide-binding</keyword>
<keyword id="KW-1185">Reference proteome</keyword>
<keyword id="KW-1278">Translocase</keyword>
<keyword id="KW-0812">Transmembrane</keyword>
<keyword id="KW-1133">Transmembrane helix</keyword>
<keyword id="KW-0813">Transport</keyword>
<protein>
    <recommendedName>
        <fullName>Multidrug resistance-like ATP-binding protein MdlA</fullName>
        <ecNumber>7.6.2.2</ecNumber>
    </recommendedName>
</protein>
<dbReference type="EC" id="7.6.2.2"/>
<dbReference type="EMBL" id="L08627">
    <property type="protein sequence ID" value="AAC36870.1"/>
    <property type="status" value="ALT_FRAME"/>
    <property type="molecule type" value="Unassigned_DNA"/>
</dbReference>
<dbReference type="EMBL" id="U82664">
    <property type="protein sequence ID" value="AAB40204.1"/>
    <property type="molecule type" value="Genomic_DNA"/>
</dbReference>
<dbReference type="EMBL" id="U00096">
    <property type="protein sequence ID" value="AAC73551.1"/>
    <property type="molecule type" value="Genomic_DNA"/>
</dbReference>
<dbReference type="EMBL" id="AP009048">
    <property type="protein sequence ID" value="BAE76228.1"/>
    <property type="molecule type" value="Genomic_DNA"/>
</dbReference>
<dbReference type="PIR" id="H64774">
    <property type="entry name" value="H64774"/>
</dbReference>
<dbReference type="RefSeq" id="NP_414982.1">
    <property type="nucleotide sequence ID" value="NC_000913.3"/>
</dbReference>
<dbReference type="RefSeq" id="WP_001235649.1">
    <property type="nucleotide sequence ID" value="NZ_SSZK01000009.1"/>
</dbReference>
<dbReference type="SMR" id="P77265"/>
<dbReference type="BioGRID" id="4261677">
    <property type="interactions" value="158"/>
</dbReference>
<dbReference type="DIP" id="DIP-10173N"/>
<dbReference type="FunCoup" id="P77265">
    <property type="interactions" value="298"/>
</dbReference>
<dbReference type="IntAct" id="P77265">
    <property type="interactions" value="1"/>
</dbReference>
<dbReference type="STRING" id="511145.b0448"/>
<dbReference type="TCDB" id="3.A.1.106.13">
    <property type="family name" value="the atp-binding cassette (abc) superfamily"/>
</dbReference>
<dbReference type="PaxDb" id="511145-b0448"/>
<dbReference type="EnsemblBacteria" id="AAC73551">
    <property type="protein sequence ID" value="AAC73551"/>
    <property type="gene ID" value="b0448"/>
</dbReference>
<dbReference type="GeneID" id="945092"/>
<dbReference type="KEGG" id="ecj:JW0438"/>
<dbReference type="KEGG" id="eco:b0448"/>
<dbReference type="KEGG" id="ecoc:C3026_02195"/>
<dbReference type="PATRIC" id="fig|1411691.4.peg.1828"/>
<dbReference type="EchoBASE" id="EB1579"/>
<dbReference type="eggNOG" id="COG1132">
    <property type="taxonomic scope" value="Bacteria"/>
</dbReference>
<dbReference type="HOGENOM" id="CLU_000604_84_6_6"/>
<dbReference type="InParanoid" id="P77265"/>
<dbReference type="OMA" id="CRLYEPQ"/>
<dbReference type="OrthoDB" id="9806127at2"/>
<dbReference type="PhylomeDB" id="P77265"/>
<dbReference type="BioCyc" id="EcoCyc:MDLA-MONOMER"/>
<dbReference type="PRO" id="PR:P77265"/>
<dbReference type="Proteomes" id="UP000000625">
    <property type="component" value="Chromosome"/>
</dbReference>
<dbReference type="GO" id="GO:0016020">
    <property type="term" value="C:membrane"/>
    <property type="evidence" value="ECO:0000255"/>
    <property type="project" value="EcoCyc"/>
</dbReference>
<dbReference type="GO" id="GO:0005886">
    <property type="term" value="C:plasma membrane"/>
    <property type="evidence" value="ECO:0000314"/>
    <property type="project" value="EcoCyc"/>
</dbReference>
<dbReference type="GO" id="GO:0008559">
    <property type="term" value="F:ABC-type xenobiotic transporter activity"/>
    <property type="evidence" value="ECO:0007669"/>
    <property type="project" value="UniProtKB-EC"/>
</dbReference>
<dbReference type="GO" id="GO:0005524">
    <property type="term" value="F:ATP binding"/>
    <property type="evidence" value="ECO:0000255"/>
    <property type="project" value="EcoCyc"/>
</dbReference>
<dbReference type="GO" id="GO:0016887">
    <property type="term" value="F:ATP hydrolysis activity"/>
    <property type="evidence" value="ECO:0007669"/>
    <property type="project" value="InterPro"/>
</dbReference>
<dbReference type="GO" id="GO:0042626">
    <property type="term" value="F:ATPase-coupled transmembrane transporter activity"/>
    <property type="evidence" value="ECO:0000318"/>
    <property type="project" value="GO_Central"/>
</dbReference>
<dbReference type="GO" id="GO:0055085">
    <property type="term" value="P:transmembrane transport"/>
    <property type="evidence" value="ECO:0000318"/>
    <property type="project" value="GO_Central"/>
</dbReference>
<dbReference type="GO" id="GO:0046618">
    <property type="term" value="P:xenobiotic export from cell"/>
    <property type="evidence" value="ECO:0000305"/>
    <property type="project" value="EcoCyc"/>
</dbReference>
<dbReference type="CDD" id="cd18541">
    <property type="entry name" value="ABC_6TM_TmrB_like"/>
    <property type="match status" value="1"/>
</dbReference>
<dbReference type="FunFam" id="1.20.1560.10:FF:000011">
    <property type="entry name" value="Multidrug ABC transporter ATP-binding protein"/>
    <property type="match status" value="1"/>
</dbReference>
<dbReference type="FunFam" id="3.40.50.300:FF:000221">
    <property type="entry name" value="Multidrug ABC transporter ATP-binding protein"/>
    <property type="match status" value="1"/>
</dbReference>
<dbReference type="Gene3D" id="1.20.1560.10">
    <property type="entry name" value="ABC transporter type 1, transmembrane domain"/>
    <property type="match status" value="1"/>
</dbReference>
<dbReference type="Gene3D" id="3.40.50.300">
    <property type="entry name" value="P-loop containing nucleotide triphosphate hydrolases"/>
    <property type="match status" value="1"/>
</dbReference>
<dbReference type="InterPro" id="IPR003593">
    <property type="entry name" value="AAA+_ATPase"/>
</dbReference>
<dbReference type="InterPro" id="IPR011527">
    <property type="entry name" value="ABC1_TM_dom"/>
</dbReference>
<dbReference type="InterPro" id="IPR036640">
    <property type="entry name" value="ABC1_TM_sf"/>
</dbReference>
<dbReference type="InterPro" id="IPR003439">
    <property type="entry name" value="ABC_transporter-like_ATP-bd"/>
</dbReference>
<dbReference type="InterPro" id="IPR017871">
    <property type="entry name" value="ABC_transporter-like_CS"/>
</dbReference>
<dbReference type="InterPro" id="IPR027417">
    <property type="entry name" value="P-loop_NTPase"/>
</dbReference>
<dbReference type="InterPro" id="IPR039421">
    <property type="entry name" value="Type_1_exporter"/>
</dbReference>
<dbReference type="NCBIfam" id="NF008055">
    <property type="entry name" value="PRK10789.1"/>
    <property type="match status" value="1"/>
</dbReference>
<dbReference type="PANTHER" id="PTHR43394:SF1">
    <property type="entry name" value="ATP-BINDING CASSETTE SUB-FAMILY B MEMBER 10, MITOCHONDRIAL"/>
    <property type="match status" value="1"/>
</dbReference>
<dbReference type="PANTHER" id="PTHR43394">
    <property type="entry name" value="ATP-DEPENDENT PERMEASE MDL1, MITOCHONDRIAL"/>
    <property type="match status" value="1"/>
</dbReference>
<dbReference type="Pfam" id="PF00664">
    <property type="entry name" value="ABC_membrane"/>
    <property type="match status" value="1"/>
</dbReference>
<dbReference type="Pfam" id="PF00005">
    <property type="entry name" value="ABC_tran"/>
    <property type="match status" value="1"/>
</dbReference>
<dbReference type="SMART" id="SM00382">
    <property type="entry name" value="AAA"/>
    <property type="match status" value="1"/>
</dbReference>
<dbReference type="SUPFAM" id="SSF90123">
    <property type="entry name" value="ABC transporter transmembrane region"/>
    <property type="match status" value="1"/>
</dbReference>
<dbReference type="SUPFAM" id="SSF52540">
    <property type="entry name" value="P-loop containing nucleoside triphosphate hydrolases"/>
    <property type="match status" value="1"/>
</dbReference>
<dbReference type="PROSITE" id="PS50929">
    <property type="entry name" value="ABC_TM1F"/>
    <property type="match status" value="1"/>
</dbReference>
<dbReference type="PROSITE" id="PS00211">
    <property type="entry name" value="ABC_TRANSPORTER_1"/>
    <property type="match status" value="1"/>
</dbReference>
<dbReference type="PROSITE" id="PS50893">
    <property type="entry name" value="ABC_TRANSPORTER_2"/>
    <property type="match status" value="1"/>
</dbReference>
<gene>
    <name type="primary">mdlA</name>
    <name type="synonym">mdl</name>
    <name type="ordered locus">b0448</name>
    <name type="ordered locus">JW0438</name>
</gene>
<sequence length="590" mass="66017">MRLFAQLSWYFRREWRRYLGAVALLVIIAMLQLVPPKVVGIVVDGVTEQHFTTGQILMWIATMVLIAVVVYLLRYVWRVLLFGASYQLAVELREDYYRQLSRQHPEFYLRHRTGDLMARATNDVDRVVFAAGEGVLTLVDSLVMGCAVLIMMSTQISWQLTLFSLLPMPVMAIMIKRNGDALHERFKLAQAAFSSLNDRTQESLTSIRMIKAFGLEDRQSALFAADAEDTGKKNMRVARIDARFDPTIYIAIGMANLLAIGGGSWMVVQGSLTLGQLTSFMMYLGLMIWPMLALAWMFNIVERGSAAYSRIRAMLAEAPVVNDGSEPVPEGRGELDVNIHQFTYPQTDHPALENVNFALKPGQMLGICGPTGSGKSTLLSLIQRHFDVSEGDIRFHDIPLTKLQLDSWRSRLAVVSQTPFLFSDTVANNIALGCPNATQQEIEHVARLASVHDDILRLPQGYDTEVGERGVMLSGGQKQRISIARALLVNAEILILDDALSAVDGRTEHQILHNLRQWGQGRTVIISAHRLSALTEASEIIVMQHGHIAQRGNHDVLAQQSGWYRDMYRYQQLEAALDDAPENREEAVDA</sequence>
<name>MDLA_ECOLI</name>
<comment type="catalytic activity">
    <reaction>
        <text>ATP + H2O + xenobioticSide 1 = ADP + phosphate + xenobioticSide 2.</text>
        <dbReference type="EC" id="7.6.2.2"/>
    </reaction>
</comment>
<comment type="subcellular location">
    <subcellularLocation>
        <location evidence="3">Cell inner membrane</location>
        <topology evidence="2 3">Multi-pass membrane protein</topology>
    </subcellularLocation>
</comment>
<comment type="similarity">
    <text evidence="4">Belongs to the ABC transporter superfamily. Drug exporter-2 (TC 3.A.1.117) family.</text>
</comment>
<comment type="sequence caution" evidence="4">
    <conflict type="frameshift">
        <sequence resource="EMBL-CDS" id="AAC36870"/>
    </conflict>
    <text>Fuses together mdlA and mdlB.</text>
</comment>
<proteinExistence type="inferred from homology"/>